<protein>
    <recommendedName>
        <fullName evidence="1">UPF0335 protein M446_5200</fullName>
    </recommendedName>
</protein>
<feature type="chain" id="PRO_1000198479" description="UPF0335 protein M446_5200">
    <location>
        <begin position="1"/>
        <end position="88"/>
    </location>
</feature>
<name>Y5200_METS4</name>
<sequence length="88" mass="9829">MAASPVLAVDNSSVAADQLKSIIERIERLEEEKAGLAGDIKDVYAEAKANGFDTKVLRKIISIRKRDHEERQEEEAILELYMQALGMV</sequence>
<gene>
    <name type="ordered locus">M446_5200</name>
</gene>
<reference key="1">
    <citation type="submission" date="2008-02" db="EMBL/GenBank/DDBJ databases">
        <title>Complete sequence of chromosome of Methylobacterium sp. 4-46.</title>
        <authorList>
            <consortium name="US DOE Joint Genome Institute"/>
            <person name="Copeland A."/>
            <person name="Lucas S."/>
            <person name="Lapidus A."/>
            <person name="Glavina del Rio T."/>
            <person name="Dalin E."/>
            <person name="Tice H."/>
            <person name="Bruce D."/>
            <person name="Goodwin L."/>
            <person name="Pitluck S."/>
            <person name="Chertkov O."/>
            <person name="Brettin T."/>
            <person name="Detter J.C."/>
            <person name="Han C."/>
            <person name="Kuske C.R."/>
            <person name="Schmutz J."/>
            <person name="Larimer F."/>
            <person name="Land M."/>
            <person name="Hauser L."/>
            <person name="Kyrpides N."/>
            <person name="Ivanova N."/>
            <person name="Marx C.J."/>
            <person name="Richardson P."/>
        </authorList>
    </citation>
    <scope>NUCLEOTIDE SEQUENCE [LARGE SCALE GENOMIC DNA]</scope>
    <source>
        <strain>4-46</strain>
    </source>
</reference>
<comment type="similarity">
    <text evidence="1">Belongs to the UPF0335 family.</text>
</comment>
<proteinExistence type="inferred from homology"/>
<organism>
    <name type="scientific">Methylobacterium sp. (strain 4-46)</name>
    <dbReference type="NCBI Taxonomy" id="426117"/>
    <lineage>
        <taxon>Bacteria</taxon>
        <taxon>Pseudomonadati</taxon>
        <taxon>Pseudomonadota</taxon>
        <taxon>Alphaproteobacteria</taxon>
        <taxon>Hyphomicrobiales</taxon>
        <taxon>Methylobacteriaceae</taxon>
        <taxon>Methylobacterium</taxon>
    </lineage>
</organism>
<accession>B0ULP6</accession>
<dbReference type="EMBL" id="CP000943">
    <property type="protein sequence ID" value="ACA19525.1"/>
    <property type="molecule type" value="Genomic_DNA"/>
</dbReference>
<dbReference type="RefSeq" id="WP_012334911.1">
    <property type="nucleotide sequence ID" value="NC_010511.1"/>
</dbReference>
<dbReference type="SMR" id="B0ULP6"/>
<dbReference type="STRING" id="426117.M446_5200"/>
<dbReference type="KEGG" id="met:M446_5200"/>
<dbReference type="eggNOG" id="COG3750">
    <property type="taxonomic scope" value="Bacteria"/>
</dbReference>
<dbReference type="HOGENOM" id="CLU_158651_3_0_5"/>
<dbReference type="GO" id="GO:0003677">
    <property type="term" value="F:DNA binding"/>
    <property type="evidence" value="ECO:0007669"/>
    <property type="project" value="InterPro"/>
</dbReference>
<dbReference type="Gene3D" id="1.10.10.10">
    <property type="entry name" value="Winged helix-like DNA-binding domain superfamily/Winged helix DNA-binding domain"/>
    <property type="match status" value="1"/>
</dbReference>
<dbReference type="HAMAP" id="MF_00797">
    <property type="entry name" value="UPF0335"/>
    <property type="match status" value="1"/>
</dbReference>
<dbReference type="InterPro" id="IPR018753">
    <property type="entry name" value="GapR-like"/>
</dbReference>
<dbReference type="InterPro" id="IPR046367">
    <property type="entry name" value="GapR-like_DNA-bd"/>
</dbReference>
<dbReference type="InterPro" id="IPR036388">
    <property type="entry name" value="WH-like_DNA-bd_sf"/>
</dbReference>
<dbReference type="NCBIfam" id="NF010247">
    <property type="entry name" value="PRK13694.1"/>
    <property type="match status" value="1"/>
</dbReference>
<dbReference type="Pfam" id="PF10073">
    <property type="entry name" value="GapR_DNA-bd"/>
    <property type="match status" value="1"/>
</dbReference>
<evidence type="ECO:0000255" key="1">
    <source>
        <dbReference type="HAMAP-Rule" id="MF_00797"/>
    </source>
</evidence>